<sequence length="333" mass="34686">MSATLQKLAELTGSSLIGDSTLTICSVANLNHATPRDLVFCEDEKYLGDAFASPAAAIVVGEFAASAHDAPKPLLISTQPRLAFAKAAKVLRSHKKRSGGIVHPTAVVPPTVVFGAEVVVGAYVVLGEHVHIGDRVCIGAGVCIGSDVKIGTDCEIHSRVTIYHGTHIGNHVIIHAGAVLGSDGFGYVRDKLTGRYHQMPQIGHLIVGDHVDIGANVTIDRGGLEDTVIGAGTKLDNLVHIGHNVRIGENVVIAAQTGISGSCTIGAGSIIGGQVGMGDHATLEEGTILGGQSGILSEKIFREKGPCFGTPAKPLKQYLREQAALSRLSRRSE</sequence>
<name>LPXD2_KORVE</name>
<keyword id="KW-0012">Acyltransferase</keyword>
<keyword id="KW-0441">Lipid A biosynthesis</keyword>
<keyword id="KW-0444">Lipid biosynthesis</keyword>
<keyword id="KW-0443">Lipid metabolism</keyword>
<keyword id="KW-1185">Reference proteome</keyword>
<keyword id="KW-0677">Repeat</keyword>
<keyword id="KW-0808">Transferase</keyword>
<dbReference type="EC" id="2.3.1.191" evidence="1"/>
<dbReference type="EMBL" id="CP000360">
    <property type="protein sequence ID" value="ABF41346.1"/>
    <property type="molecule type" value="Genomic_DNA"/>
</dbReference>
<dbReference type="RefSeq" id="WP_011523147.1">
    <property type="nucleotide sequence ID" value="NC_008009.1"/>
</dbReference>
<dbReference type="SMR" id="Q1IP54"/>
<dbReference type="STRING" id="204669.Acid345_2345"/>
<dbReference type="EnsemblBacteria" id="ABF41346">
    <property type="protein sequence ID" value="ABF41346"/>
    <property type="gene ID" value="Acid345_2345"/>
</dbReference>
<dbReference type="KEGG" id="aba:Acid345_2345"/>
<dbReference type="eggNOG" id="COG1044">
    <property type="taxonomic scope" value="Bacteria"/>
</dbReference>
<dbReference type="HOGENOM" id="CLU_049865_0_0_0"/>
<dbReference type="OrthoDB" id="9784739at2"/>
<dbReference type="UniPathway" id="UPA00973"/>
<dbReference type="Proteomes" id="UP000002432">
    <property type="component" value="Chromosome"/>
</dbReference>
<dbReference type="GO" id="GO:0016020">
    <property type="term" value="C:membrane"/>
    <property type="evidence" value="ECO:0007669"/>
    <property type="project" value="GOC"/>
</dbReference>
<dbReference type="GO" id="GO:0016410">
    <property type="term" value="F:N-acyltransferase activity"/>
    <property type="evidence" value="ECO:0007669"/>
    <property type="project" value="InterPro"/>
</dbReference>
<dbReference type="GO" id="GO:0009245">
    <property type="term" value="P:lipid A biosynthetic process"/>
    <property type="evidence" value="ECO:0007669"/>
    <property type="project" value="UniProtKB-UniRule"/>
</dbReference>
<dbReference type="CDD" id="cd03352">
    <property type="entry name" value="LbH_LpxD"/>
    <property type="match status" value="1"/>
</dbReference>
<dbReference type="Gene3D" id="2.160.10.10">
    <property type="entry name" value="Hexapeptide repeat proteins"/>
    <property type="match status" value="1"/>
</dbReference>
<dbReference type="Gene3D" id="3.40.1390.10">
    <property type="entry name" value="MurE/MurF, N-terminal domain"/>
    <property type="match status" value="1"/>
</dbReference>
<dbReference type="HAMAP" id="MF_00523">
    <property type="entry name" value="LpxD"/>
    <property type="match status" value="1"/>
</dbReference>
<dbReference type="InterPro" id="IPR001451">
    <property type="entry name" value="Hexapep"/>
</dbReference>
<dbReference type="InterPro" id="IPR018357">
    <property type="entry name" value="Hexapep_transf_CS"/>
</dbReference>
<dbReference type="InterPro" id="IPR007691">
    <property type="entry name" value="LpxD"/>
</dbReference>
<dbReference type="InterPro" id="IPR011004">
    <property type="entry name" value="Trimer_LpxA-like_sf"/>
</dbReference>
<dbReference type="InterPro" id="IPR020573">
    <property type="entry name" value="UDP_GlcNAc_AcTrfase_non-rep"/>
</dbReference>
<dbReference type="NCBIfam" id="TIGR01853">
    <property type="entry name" value="lipid_A_lpxD"/>
    <property type="match status" value="1"/>
</dbReference>
<dbReference type="NCBIfam" id="NF002060">
    <property type="entry name" value="PRK00892.1"/>
    <property type="match status" value="1"/>
</dbReference>
<dbReference type="PANTHER" id="PTHR43378">
    <property type="entry name" value="UDP-3-O-ACYLGLUCOSAMINE N-ACYLTRANSFERASE"/>
    <property type="match status" value="1"/>
</dbReference>
<dbReference type="PANTHER" id="PTHR43378:SF2">
    <property type="entry name" value="UDP-3-O-ACYLGLUCOSAMINE N-ACYLTRANSFERASE 1, MITOCHONDRIAL-RELATED"/>
    <property type="match status" value="1"/>
</dbReference>
<dbReference type="Pfam" id="PF00132">
    <property type="entry name" value="Hexapep"/>
    <property type="match status" value="3"/>
</dbReference>
<dbReference type="Pfam" id="PF04613">
    <property type="entry name" value="LpxD"/>
    <property type="match status" value="1"/>
</dbReference>
<dbReference type="SUPFAM" id="SSF51161">
    <property type="entry name" value="Trimeric LpxA-like enzymes"/>
    <property type="match status" value="1"/>
</dbReference>
<dbReference type="PROSITE" id="PS00101">
    <property type="entry name" value="HEXAPEP_TRANSFERASES"/>
    <property type="match status" value="1"/>
</dbReference>
<feature type="chain" id="PRO_0000264341" description="UDP-3-O-acylglucosamine N-acyltransferase 2">
    <location>
        <begin position="1"/>
        <end position="333"/>
    </location>
</feature>
<feature type="active site" description="Proton acceptor" evidence="1">
    <location>
        <position position="243"/>
    </location>
</feature>
<comment type="function">
    <text evidence="1">Catalyzes the N-acylation of UDP-3-O-acylglucosamine using 3-hydroxyacyl-ACP as the acyl donor. Is involved in the biosynthesis of lipid A, a phosphorylated glycolipid that anchors the lipopolysaccharide to the outer membrane of the cell.</text>
</comment>
<comment type="catalytic activity">
    <reaction evidence="1">
        <text>a UDP-3-O-[(3R)-3-hydroxyacyl]-alpha-D-glucosamine + a (3R)-hydroxyacyl-[ACP] = a UDP-2-N,3-O-bis[(3R)-3-hydroxyacyl]-alpha-D-glucosamine + holo-[ACP] + H(+)</text>
        <dbReference type="Rhea" id="RHEA:53836"/>
        <dbReference type="Rhea" id="RHEA-COMP:9685"/>
        <dbReference type="Rhea" id="RHEA-COMP:9945"/>
        <dbReference type="ChEBI" id="CHEBI:15378"/>
        <dbReference type="ChEBI" id="CHEBI:64479"/>
        <dbReference type="ChEBI" id="CHEBI:78827"/>
        <dbReference type="ChEBI" id="CHEBI:137740"/>
        <dbReference type="ChEBI" id="CHEBI:137748"/>
        <dbReference type="EC" id="2.3.1.191"/>
    </reaction>
</comment>
<comment type="pathway">
    <text evidence="1">Bacterial outer membrane biogenesis; LPS lipid A biosynthesis.</text>
</comment>
<comment type="subunit">
    <text evidence="1">Homotrimer.</text>
</comment>
<comment type="similarity">
    <text evidence="1">Belongs to the transferase hexapeptide repeat family. LpxD subfamily.</text>
</comment>
<proteinExistence type="inferred from homology"/>
<evidence type="ECO:0000255" key="1">
    <source>
        <dbReference type="HAMAP-Rule" id="MF_00523"/>
    </source>
</evidence>
<gene>
    <name evidence="1" type="primary">lpxD2</name>
    <name type="ordered locus">Acid345_2345</name>
</gene>
<organism>
    <name type="scientific">Koribacter versatilis (strain Ellin345)</name>
    <dbReference type="NCBI Taxonomy" id="204669"/>
    <lineage>
        <taxon>Bacteria</taxon>
        <taxon>Pseudomonadati</taxon>
        <taxon>Acidobacteriota</taxon>
        <taxon>Terriglobia</taxon>
        <taxon>Terriglobales</taxon>
        <taxon>Candidatus Korobacteraceae</taxon>
        <taxon>Candidatus Korobacter</taxon>
    </lineage>
</organism>
<protein>
    <recommendedName>
        <fullName evidence="1">UDP-3-O-acylglucosamine N-acyltransferase 2</fullName>
        <ecNumber evidence="1">2.3.1.191</ecNumber>
    </recommendedName>
</protein>
<reference key="1">
    <citation type="journal article" date="2009" name="Appl. Environ. Microbiol.">
        <title>Three genomes from the phylum Acidobacteria provide insight into the lifestyles of these microorganisms in soils.</title>
        <authorList>
            <person name="Ward N.L."/>
            <person name="Challacombe J.F."/>
            <person name="Janssen P.H."/>
            <person name="Henrissat B."/>
            <person name="Coutinho P.M."/>
            <person name="Wu M."/>
            <person name="Xie G."/>
            <person name="Haft D.H."/>
            <person name="Sait M."/>
            <person name="Badger J."/>
            <person name="Barabote R.D."/>
            <person name="Bradley B."/>
            <person name="Brettin T.S."/>
            <person name="Brinkac L.M."/>
            <person name="Bruce D."/>
            <person name="Creasy T."/>
            <person name="Daugherty S.C."/>
            <person name="Davidsen T.M."/>
            <person name="DeBoy R.T."/>
            <person name="Detter J.C."/>
            <person name="Dodson R.J."/>
            <person name="Durkin A.S."/>
            <person name="Ganapathy A."/>
            <person name="Gwinn-Giglio M."/>
            <person name="Han C.S."/>
            <person name="Khouri H."/>
            <person name="Kiss H."/>
            <person name="Kothari S.P."/>
            <person name="Madupu R."/>
            <person name="Nelson K.E."/>
            <person name="Nelson W.C."/>
            <person name="Paulsen I."/>
            <person name="Penn K."/>
            <person name="Ren Q."/>
            <person name="Rosovitz M.J."/>
            <person name="Selengut J.D."/>
            <person name="Shrivastava S."/>
            <person name="Sullivan S.A."/>
            <person name="Tapia R."/>
            <person name="Thompson L.S."/>
            <person name="Watkins K.L."/>
            <person name="Yang Q."/>
            <person name="Yu C."/>
            <person name="Zafar N."/>
            <person name="Zhou L."/>
            <person name="Kuske C.R."/>
        </authorList>
    </citation>
    <scope>NUCLEOTIDE SEQUENCE [LARGE SCALE GENOMIC DNA]</scope>
    <source>
        <strain>Ellin345</strain>
    </source>
</reference>
<accession>Q1IP54</accession>